<proteinExistence type="evidence at protein level"/>
<protein>
    <recommendedName>
        <fullName>Arginine and glutamate-rich protein 1</fullName>
    </recommendedName>
</protein>
<accession>Q5BJT0</accession>
<accession>A0JPJ8</accession>
<keyword id="KW-0158">Chromosome</keyword>
<keyword id="KW-0507">mRNA processing</keyword>
<keyword id="KW-0508">mRNA splicing</keyword>
<keyword id="KW-0539">Nucleus</keyword>
<keyword id="KW-0597">Phosphoprotein</keyword>
<keyword id="KW-1185">Reference proteome</keyword>
<keyword id="KW-0694">RNA-binding</keyword>
<feature type="chain" id="PRO_0000288440" description="Arginine and glutamate-rich protein 1">
    <location>
        <begin position="1"/>
        <end position="271"/>
    </location>
</feature>
<feature type="region of interest" description="Disordered" evidence="3">
    <location>
        <begin position="1"/>
        <end position="112"/>
    </location>
</feature>
<feature type="region of interest" description="Necessary and sufficient for RNA binding" evidence="2">
    <location>
        <begin position="1"/>
        <end position="72"/>
    </location>
</feature>
<feature type="region of interest" description="Necessary and sufficient for transcriptional regulation" evidence="2">
    <location>
        <begin position="73"/>
        <end position="271"/>
    </location>
</feature>
<feature type="region of interest" description="Disordered" evidence="3">
    <location>
        <begin position="236"/>
        <end position="271"/>
    </location>
</feature>
<feature type="short sequence motif" description="LXXLL motif 1; degenerate" evidence="2">
    <location>
        <begin position="170"/>
        <end position="174"/>
    </location>
</feature>
<feature type="short sequence motif" description="LXXLL motif 2; degenerate" evidence="2">
    <location>
        <begin position="199"/>
        <end position="203"/>
    </location>
</feature>
<feature type="compositionally biased region" description="Basic residues" evidence="3">
    <location>
        <begin position="1"/>
        <end position="29"/>
    </location>
</feature>
<feature type="compositionally biased region" description="Basic residues" evidence="3">
    <location>
        <begin position="37"/>
        <end position="58"/>
    </location>
</feature>
<feature type="compositionally biased region" description="Basic and acidic residues" evidence="3">
    <location>
        <begin position="66"/>
        <end position="82"/>
    </location>
</feature>
<feature type="compositionally biased region" description="Basic and acidic residues" evidence="3">
    <location>
        <begin position="91"/>
        <end position="112"/>
    </location>
</feature>
<feature type="compositionally biased region" description="Basic and acidic residues" evidence="3">
    <location>
        <begin position="236"/>
        <end position="251"/>
    </location>
</feature>
<feature type="modified residue" description="Phosphoserine" evidence="2">
    <location>
        <position position="58"/>
    </location>
</feature>
<feature type="modified residue" description="Phosphoserine" evidence="2">
    <location>
        <position position="60"/>
    </location>
</feature>
<feature type="modified residue" description="Phosphothreonine" evidence="2">
    <location>
        <position position="61"/>
    </location>
</feature>
<feature type="modified residue" description="Phosphoserine" evidence="2">
    <location>
        <position position="74"/>
    </location>
</feature>
<feature type="modified residue" description="Phosphoserine" evidence="6">
    <location>
        <position position="75"/>
    </location>
</feature>
<feature type="modified residue" description="Phosphoserine" evidence="2">
    <location>
        <position position="264"/>
    </location>
</feature>
<feature type="sequence conflict" description="In Ref. 1; AAI27460." evidence="4" ref="1">
    <original>E</original>
    <variation>G</variation>
    <location>
        <position position="53"/>
    </location>
</feature>
<gene>
    <name type="primary">Arglu1</name>
</gene>
<comment type="function">
    <text evidence="1 2">Dual function regulator of gene expression; regulator of transcription and modulator of alternative splicing. General coactivator of nuclear receptor-induced gene expression, including genes activated by the glucocorticoid receptor NR3C1. Binds to a subset of pre-mRNAs and to components of the spliceosome machinery to directly modulate basal alternative splicing; involved in simple and complex cassette exon splicing events (By similarity). Binds its own pre-mRNA and regulates its alternative splicing and degradation; one of the alternatively spliced products is a stable intronic sequence RNA (sisRNA) that binds the protein to regulate its ability to affect splicing (By similarity). Binding of the sisRNA stimulates phase separation and localization to nuclear speckles, which may contribute to activation of nuclear receptor-induced gene expression (By similarity). May also indirectly modulate alternative splicing (By similarity). Regulates transcription of genes involved in heart development, neuronal cell function, protein localization and chromatin localization. Regulates splicing of genes involved in neurogenesis and chromatin organization. Essential for central nervous system development (By similarity). Required for the estrogen-dependent expression of ESR1 target genes. Can act in cooperation with MED1 (By similarity).</text>
</comment>
<comment type="subunit">
    <text evidence="2">Interacts with MED1; the interaction is direct. Interacts with PUF60, U2AF2 and JMJD6; may interact with other proteins involved in RNA processing and splicing.</text>
</comment>
<comment type="subcellular location">
    <subcellularLocation>
        <location evidence="2">Nucleus</location>
    </subcellularLocation>
    <subcellularLocation>
        <location evidence="2">Nucleus speckle</location>
    </subcellularLocation>
    <subcellularLocation>
        <location evidence="2">Chromosome</location>
    </subcellularLocation>
    <text evidence="1 2">Recruited, in an estrogen-dependent manner, to ESR1 target gene promoters (By similarity). Colocalizes with MED1 in nuclear speckles (By similarity). Binding of sisRNA promotes phase separation and localization to nuclear speckles (By similarity). Associated with glucocorticoid response elements of target genes, even in the absence of glucocorticoid receptor ligands (By similarity).</text>
</comment>
<comment type="induction">
    <text evidence="2">Post-transcriptionally regulated by autoregulatory feedback loop (By similarity). ARGLU1 protein binds ARGLU1 pre-mRNA and stimulates alternative splicing to produce two alternative RNA molecules (By similarity). The first includes an additional exon between exons 2 and 3 and is rapidly degraded by nonsense mediated decay (By similarity). The second, a stable intronic sequence RNA (sisRNA), retains the entirety of intron 2 and is able to bind ARGLU1 protein preventing it from stimulating alternative splicing (By similarity).</text>
</comment>
<comment type="domain">
    <text evidence="2">The N-terminal region can bind RNA; preferentially binds 5'-CGG[AG]GG-3' motifs.</text>
</comment>
<comment type="domain">
    <text evidence="2">The non-classical LXXLL motifs are not required for nuclear receptor coactivator activity.</text>
</comment>
<comment type="domain">
    <text evidence="2">The C-terminal region is necessary and sufficient for regulation of transcription and nuclear receptor coactivator activity. The C-terminal region is not required for RNA binding.</text>
</comment>
<comment type="similarity">
    <text evidence="4">Belongs to the ARGLU1 family.</text>
</comment>
<organism evidence="5">
    <name type="scientific">Rattus norvegicus</name>
    <name type="common">Rat</name>
    <dbReference type="NCBI Taxonomy" id="10116"/>
    <lineage>
        <taxon>Eukaryota</taxon>
        <taxon>Metazoa</taxon>
        <taxon>Chordata</taxon>
        <taxon>Craniata</taxon>
        <taxon>Vertebrata</taxon>
        <taxon>Euteleostomi</taxon>
        <taxon>Mammalia</taxon>
        <taxon>Eutheria</taxon>
        <taxon>Euarchontoglires</taxon>
        <taxon>Glires</taxon>
        <taxon>Rodentia</taxon>
        <taxon>Myomorpha</taxon>
        <taxon>Muroidea</taxon>
        <taxon>Muridae</taxon>
        <taxon>Murinae</taxon>
        <taxon>Rattus</taxon>
    </lineage>
</organism>
<evidence type="ECO:0000250" key="1">
    <source>
        <dbReference type="UniProtKB" id="Q3UL36"/>
    </source>
</evidence>
<evidence type="ECO:0000250" key="2">
    <source>
        <dbReference type="UniProtKB" id="Q9NWB6"/>
    </source>
</evidence>
<evidence type="ECO:0000256" key="3">
    <source>
        <dbReference type="SAM" id="MobiDB-lite"/>
    </source>
</evidence>
<evidence type="ECO:0000305" key="4"/>
<evidence type="ECO:0000312" key="5">
    <source>
        <dbReference type="Proteomes" id="UP000002494"/>
    </source>
</evidence>
<evidence type="ECO:0007744" key="6">
    <source>
    </source>
</evidence>
<dbReference type="EMBL" id="BC091344">
    <property type="protein sequence ID" value="AAH91344.1"/>
    <property type="molecule type" value="mRNA"/>
</dbReference>
<dbReference type="EMBL" id="BC127459">
    <property type="protein sequence ID" value="AAI27460.1"/>
    <property type="molecule type" value="mRNA"/>
</dbReference>
<dbReference type="RefSeq" id="NP_001020143.1">
    <property type="nucleotide sequence ID" value="NM_001024972.2"/>
</dbReference>
<dbReference type="SMR" id="Q5BJT0"/>
<dbReference type="FunCoup" id="Q5BJT0">
    <property type="interactions" value="3781"/>
</dbReference>
<dbReference type="STRING" id="10116.ENSRNOP00000054160"/>
<dbReference type="iPTMnet" id="Q5BJT0"/>
<dbReference type="PhosphoSitePlus" id="Q5BJT0"/>
<dbReference type="PaxDb" id="10116-ENSRNOP00000054160"/>
<dbReference type="Ensembl" id="ENSRNOT00000057347.4">
    <property type="protein sequence ID" value="ENSRNOP00000054160.2"/>
    <property type="gene ID" value="ENSRNOG00000024142.7"/>
</dbReference>
<dbReference type="GeneID" id="290912"/>
<dbReference type="KEGG" id="rno:290912"/>
<dbReference type="UCSC" id="RGD:1310061">
    <property type="organism name" value="rat"/>
</dbReference>
<dbReference type="AGR" id="RGD:1310061"/>
<dbReference type="CTD" id="55082"/>
<dbReference type="RGD" id="1310061">
    <property type="gene designation" value="Arglu1"/>
</dbReference>
<dbReference type="eggNOG" id="ENOG502QPR5">
    <property type="taxonomic scope" value="Eukaryota"/>
</dbReference>
<dbReference type="GeneTree" id="ENSGT00730000111249"/>
<dbReference type="HOGENOM" id="CLU_076749_0_0_1"/>
<dbReference type="InParanoid" id="Q5BJT0"/>
<dbReference type="OMA" id="VNSHGRH"/>
<dbReference type="PhylomeDB" id="Q5BJT0"/>
<dbReference type="TreeFam" id="TF324123"/>
<dbReference type="PRO" id="PR:Q5BJT0"/>
<dbReference type="Proteomes" id="UP000002494">
    <property type="component" value="Chromosome 16"/>
</dbReference>
<dbReference type="Bgee" id="ENSRNOG00000024142">
    <property type="expression patterns" value="Expressed in thymus and 20 other cell types or tissues"/>
</dbReference>
<dbReference type="ExpressionAtlas" id="Q5BJT0">
    <property type="expression patterns" value="baseline and differential"/>
</dbReference>
<dbReference type="GO" id="GO:0005694">
    <property type="term" value="C:chromosome"/>
    <property type="evidence" value="ECO:0007669"/>
    <property type="project" value="UniProtKB-SubCell"/>
</dbReference>
<dbReference type="GO" id="GO:0005829">
    <property type="term" value="C:cytosol"/>
    <property type="evidence" value="ECO:0007669"/>
    <property type="project" value="Ensembl"/>
</dbReference>
<dbReference type="GO" id="GO:0005739">
    <property type="term" value="C:mitochondrion"/>
    <property type="evidence" value="ECO:0000318"/>
    <property type="project" value="GO_Central"/>
</dbReference>
<dbReference type="GO" id="GO:0016607">
    <property type="term" value="C:nuclear speck"/>
    <property type="evidence" value="ECO:0000250"/>
    <property type="project" value="UniProtKB"/>
</dbReference>
<dbReference type="GO" id="GO:0005654">
    <property type="term" value="C:nucleoplasm"/>
    <property type="evidence" value="ECO:0000318"/>
    <property type="project" value="GO_Central"/>
</dbReference>
<dbReference type="GO" id="GO:0036002">
    <property type="term" value="F:pre-mRNA binding"/>
    <property type="evidence" value="ECO:0000250"/>
    <property type="project" value="UniProtKB"/>
</dbReference>
<dbReference type="GO" id="GO:0003713">
    <property type="term" value="F:transcription coactivator activity"/>
    <property type="evidence" value="ECO:0000250"/>
    <property type="project" value="UniProtKB"/>
</dbReference>
<dbReference type="GO" id="GO:0006397">
    <property type="term" value="P:mRNA processing"/>
    <property type="evidence" value="ECO:0007669"/>
    <property type="project" value="UniProtKB-KW"/>
</dbReference>
<dbReference type="GO" id="GO:0000381">
    <property type="term" value="P:regulation of alternative mRNA splicing, via spliceosome"/>
    <property type="evidence" value="ECO:0000250"/>
    <property type="project" value="UniProtKB"/>
</dbReference>
<dbReference type="GO" id="GO:0008380">
    <property type="term" value="P:RNA splicing"/>
    <property type="evidence" value="ECO:0007669"/>
    <property type="project" value="UniProtKB-KW"/>
</dbReference>
<dbReference type="InterPro" id="IPR033371">
    <property type="entry name" value="ARGLU1"/>
</dbReference>
<dbReference type="PANTHER" id="PTHR31711">
    <property type="entry name" value="ARGININE AND GLUTAMATE-RICH PROTEIN 1"/>
    <property type="match status" value="1"/>
</dbReference>
<dbReference type="PANTHER" id="PTHR31711:SF1">
    <property type="entry name" value="ARGININE AND GLUTAMATE-RICH PROTEIN 1"/>
    <property type="match status" value="1"/>
</dbReference>
<dbReference type="Pfam" id="PF15346">
    <property type="entry name" value="ARGLU"/>
    <property type="match status" value="1"/>
</dbReference>
<reference key="1">
    <citation type="journal article" date="2004" name="Genome Res.">
        <title>The status, quality, and expansion of the NIH full-length cDNA project: the Mammalian Gene Collection (MGC).</title>
        <authorList>
            <consortium name="The MGC Project Team"/>
        </authorList>
    </citation>
    <scope>NUCLEOTIDE SEQUENCE [LARGE SCALE MRNA]</scope>
    <source>
        <tissue>Brain</tissue>
        <tissue>Lung</tissue>
    </source>
</reference>
<reference key="2">
    <citation type="journal article" date="2012" name="Nat. Commun.">
        <title>Quantitative maps of protein phosphorylation sites across 14 different rat organs and tissues.</title>
        <authorList>
            <person name="Lundby A."/>
            <person name="Secher A."/>
            <person name="Lage K."/>
            <person name="Nordsborg N.B."/>
            <person name="Dmytriyev A."/>
            <person name="Lundby C."/>
            <person name="Olsen J.V."/>
        </authorList>
    </citation>
    <scope>PHOSPHORYLATION [LARGE SCALE ANALYSIS] AT SER-75</scope>
    <scope>IDENTIFICATION BY MASS SPECTROMETRY [LARGE SCALE ANALYSIS]</scope>
</reference>
<sequence length="271" mass="32887">MGRSRSRSSSRSKHTKSSKHNKKRSRSRSRSRDKERVRKRSKSRESKRNRRRESRSRSRSTNAAASRRERERASSPPDRIDIFGRTVSKRSSLDEKQKREEEEKKAEFERQRKIRQQEIEEKLIEEETARRVEELVAKRVEEELEKRKDEIEREVLRRVEEAKRIMEKQLLEELERQRQAELAAQKAREEEERAKREELERILEENNRKIAEAQAKLAEEQLRIVEEQRKIHEERMKLEQERQRQQKEEQKIILGKGKSRPKLSFSLKTQD</sequence>
<name>ARGL1_RAT</name>